<proteinExistence type="inferred from homology"/>
<evidence type="ECO:0000255" key="1">
    <source>
        <dbReference type="HAMAP-Rule" id="MF_00199"/>
    </source>
</evidence>
<name>APAH_ERWT9</name>
<protein>
    <recommendedName>
        <fullName evidence="1">Bis(5'-nucleosyl)-tetraphosphatase, symmetrical</fullName>
        <ecNumber evidence="1">3.6.1.41</ecNumber>
    </recommendedName>
    <alternativeName>
        <fullName evidence="1">Ap4A hydrolase</fullName>
    </alternativeName>
    <alternativeName>
        <fullName evidence="1">Diadenosine 5',5'''-P1,P4-tetraphosphate pyrophosphohydrolase</fullName>
    </alternativeName>
    <alternativeName>
        <fullName evidence="1">Diadenosine tetraphosphatase</fullName>
    </alternativeName>
</protein>
<organism>
    <name type="scientific">Erwinia tasmaniensis (strain DSM 17950 / CFBP 7177 / CIP 109463 / NCPPB 4357 / Et1/99)</name>
    <dbReference type="NCBI Taxonomy" id="465817"/>
    <lineage>
        <taxon>Bacteria</taxon>
        <taxon>Pseudomonadati</taxon>
        <taxon>Pseudomonadota</taxon>
        <taxon>Gammaproteobacteria</taxon>
        <taxon>Enterobacterales</taxon>
        <taxon>Erwiniaceae</taxon>
        <taxon>Erwinia</taxon>
    </lineage>
</organism>
<gene>
    <name evidence="1" type="primary">apaH</name>
    <name type="ordered locus">ETA_07220</name>
</gene>
<accession>B2VGQ8</accession>
<feature type="chain" id="PRO_1000099325" description="Bis(5'-nucleosyl)-tetraphosphatase, symmetrical">
    <location>
        <begin position="1"/>
        <end position="274"/>
    </location>
</feature>
<sequence length="274" mass="30763">MSTYLIGDIHGCYHELQSLLDQVQFNPETDQLWLTGDLVARGPDSLEVLRFVRALGNCVRLVLGNHDLHLLAVYAGIGRNKTKDRLSDLLEADDVDELINWLRRQPLIQVDEEKKLVMAHAGITPQWDIATAQACAREVEAVLGSDTYPLFLNAMYGDMPNSWSPELGGLARLRFSTNALTRMRYCFPNGQLDMIAKEPPDSAPPPLKPWFDIPGPVSRDYTIVFGHWASLEGKGTPEGIVGLDTGCCWGGNLSMLRWEDKQMFIQPSRREKQL</sequence>
<reference key="1">
    <citation type="journal article" date="2008" name="Environ. Microbiol.">
        <title>The genome of Erwinia tasmaniensis strain Et1/99, a non-pathogenic bacterium in the genus Erwinia.</title>
        <authorList>
            <person name="Kube M."/>
            <person name="Migdoll A.M."/>
            <person name="Mueller I."/>
            <person name="Kuhl H."/>
            <person name="Beck A."/>
            <person name="Reinhardt R."/>
            <person name="Geider K."/>
        </authorList>
    </citation>
    <scope>NUCLEOTIDE SEQUENCE [LARGE SCALE GENOMIC DNA]</scope>
    <source>
        <strain>DSM 17950 / CFBP 7177 / CIP 109463 / NCPPB 4357 / Et1/99</strain>
    </source>
</reference>
<comment type="function">
    <text evidence="1">Hydrolyzes diadenosine 5',5'''-P1,P4-tetraphosphate to yield ADP.</text>
</comment>
<comment type="catalytic activity">
    <reaction evidence="1">
        <text>P(1),P(4)-bis(5'-adenosyl) tetraphosphate + H2O = 2 ADP + 2 H(+)</text>
        <dbReference type="Rhea" id="RHEA:24252"/>
        <dbReference type="ChEBI" id="CHEBI:15377"/>
        <dbReference type="ChEBI" id="CHEBI:15378"/>
        <dbReference type="ChEBI" id="CHEBI:58141"/>
        <dbReference type="ChEBI" id="CHEBI:456216"/>
        <dbReference type="EC" id="3.6.1.41"/>
    </reaction>
</comment>
<comment type="similarity">
    <text evidence="1">Belongs to the Ap4A hydrolase family.</text>
</comment>
<keyword id="KW-0378">Hydrolase</keyword>
<keyword id="KW-1185">Reference proteome</keyword>
<dbReference type="EC" id="3.6.1.41" evidence="1"/>
<dbReference type="EMBL" id="CU468135">
    <property type="protein sequence ID" value="CAO95768.1"/>
    <property type="molecule type" value="Genomic_DNA"/>
</dbReference>
<dbReference type="RefSeq" id="WP_012440470.1">
    <property type="nucleotide sequence ID" value="NC_010694.1"/>
</dbReference>
<dbReference type="SMR" id="B2VGQ8"/>
<dbReference type="STRING" id="465817.ETA_07220"/>
<dbReference type="KEGG" id="eta:ETA_07220"/>
<dbReference type="eggNOG" id="COG0639">
    <property type="taxonomic scope" value="Bacteria"/>
</dbReference>
<dbReference type="HOGENOM" id="CLU_056184_2_0_6"/>
<dbReference type="OrthoDB" id="9807890at2"/>
<dbReference type="Proteomes" id="UP000001726">
    <property type="component" value="Chromosome"/>
</dbReference>
<dbReference type="GO" id="GO:0008803">
    <property type="term" value="F:bis(5'-nucleosyl)-tetraphosphatase (symmetrical) activity"/>
    <property type="evidence" value="ECO:0007669"/>
    <property type="project" value="UniProtKB-UniRule"/>
</dbReference>
<dbReference type="CDD" id="cd07422">
    <property type="entry name" value="MPP_ApaH"/>
    <property type="match status" value="1"/>
</dbReference>
<dbReference type="FunFam" id="3.60.21.10:FF:000013">
    <property type="entry name" value="Bis(5'-nucleosyl)-tetraphosphatase, symmetrical"/>
    <property type="match status" value="1"/>
</dbReference>
<dbReference type="Gene3D" id="3.60.21.10">
    <property type="match status" value="1"/>
</dbReference>
<dbReference type="HAMAP" id="MF_00199">
    <property type="entry name" value="ApaH"/>
    <property type="match status" value="1"/>
</dbReference>
<dbReference type="InterPro" id="IPR004617">
    <property type="entry name" value="ApaH"/>
</dbReference>
<dbReference type="InterPro" id="IPR004843">
    <property type="entry name" value="Calcineurin-like_PHP_ApaH"/>
</dbReference>
<dbReference type="InterPro" id="IPR029052">
    <property type="entry name" value="Metallo-depent_PP-like"/>
</dbReference>
<dbReference type="NCBIfam" id="TIGR00668">
    <property type="entry name" value="apaH"/>
    <property type="match status" value="1"/>
</dbReference>
<dbReference type="NCBIfam" id="NF001204">
    <property type="entry name" value="PRK00166.1"/>
    <property type="match status" value="1"/>
</dbReference>
<dbReference type="PANTHER" id="PTHR40942">
    <property type="match status" value="1"/>
</dbReference>
<dbReference type="PANTHER" id="PTHR40942:SF4">
    <property type="entry name" value="CYTOCHROME C5"/>
    <property type="match status" value="1"/>
</dbReference>
<dbReference type="Pfam" id="PF00149">
    <property type="entry name" value="Metallophos"/>
    <property type="match status" value="1"/>
</dbReference>
<dbReference type="PIRSF" id="PIRSF000903">
    <property type="entry name" value="B5n-ttraPtase_sm"/>
    <property type="match status" value="1"/>
</dbReference>
<dbReference type="SUPFAM" id="SSF56300">
    <property type="entry name" value="Metallo-dependent phosphatases"/>
    <property type="match status" value="1"/>
</dbReference>